<proteinExistence type="inferred from homology"/>
<gene>
    <name evidence="1" type="primary">argJ</name>
    <name type="ordered locus">MmarC5_0705</name>
</gene>
<comment type="function">
    <text evidence="1">Catalyzes the transfer of the acetyl group from N(2)-acetylornithine to glutamate, forming N-acetylglutamate and L-ornithine.</text>
</comment>
<comment type="catalytic activity">
    <reaction evidence="1">
        <text>N(2)-acetyl-L-ornithine + L-glutamate = N-acetyl-L-glutamate + L-ornithine</text>
        <dbReference type="Rhea" id="RHEA:15349"/>
        <dbReference type="ChEBI" id="CHEBI:29985"/>
        <dbReference type="ChEBI" id="CHEBI:44337"/>
        <dbReference type="ChEBI" id="CHEBI:46911"/>
        <dbReference type="ChEBI" id="CHEBI:57805"/>
        <dbReference type="EC" id="2.3.1.35"/>
    </reaction>
</comment>
<comment type="pathway">
    <text evidence="1">Amino-acid biosynthesis; L-arginine biosynthesis; L-ornithine and N-acetyl-L-glutamate from L-glutamate and N(2)-acetyl-L-ornithine (cyclic): step 1/1.</text>
</comment>
<comment type="subunit">
    <text evidence="1">Heterotetramer of two alpha and two beta chains.</text>
</comment>
<comment type="subcellular location">
    <subcellularLocation>
        <location evidence="1">Cytoplasm</location>
    </subcellularLocation>
</comment>
<comment type="similarity">
    <text evidence="1">Belongs to the ArgJ family.</text>
</comment>
<dbReference type="EC" id="2.3.1.35" evidence="1"/>
<dbReference type="EMBL" id="CP000609">
    <property type="protein sequence ID" value="ABO35015.1"/>
    <property type="molecule type" value="Genomic_DNA"/>
</dbReference>
<dbReference type="RefSeq" id="WP_011868469.1">
    <property type="nucleotide sequence ID" value="NC_009135.1"/>
</dbReference>
<dbReference type="SMR" id="A4FXT1"/>
<dbReference type="STRING" id="402880.MmarC5_0705"/>
<dbReference type="MEROPS" id="T05.002"/>
<dbReference type="GeneID" id="4929141"/>
<dbReference type="KEGG" id="mmq:MmarC5_0705"/>
<dbReference type="eggNOG" id="arCOG04413">
    <property type="taxonomic scope" value="Archaea"/>
</dbReference>
<dbReference type="HOGENOM" id="CLU_027172_1_0_2"/>
<dbReference type="OrthoDB" id="52592at2157"/>
<dbReference type="UniPathway" id="UPA00068">
    <property type="reaction ID" value="UER00111"/>
</dbReference>
<dbReference type="Proteomes" id="UP000000253">
    <property type="component" value="Chromosome"/>
</dbReference>
<dbReference type="GO" id="GO:0005737">
    <property type="term" value="C:cytoplasm"/>
    <property type="evidence" value="ECO:0007669"/>
    <property type="project" value="UniProtKB-SubCell"/>
</dbReference>
<dbReference type="GO" id="GO:0004358">
    <property type="term" value="F:glutamate N-acetyltransferase activity"/>
    <property type="evidence" value="ECO:0007669"/>
    <property type="project" value="UniProtKB-UniRule"/>
</dbReference>
<dbReference type="GO" id="GO:0004042">
    <property type="term" value="F:L-glutamate N-acetyltransferase activity"/>
    <property type="evidence" value="ECO:0007669"/>
    <property type="project" value="UniProtKB-UniRule"/>
</dbReference>
<dbReference type="GO" id="GO:0006526">
    <property type="term" value="P:L-arginine biosynthetic process"/>
    <property type="evidence" value="ECO:0007669"/>
    <property type="project" value="UniProtKB-UniRule"/>
</dbReference>
<dbReference type="GO" id="GO:0006592">
    <property type="term" value="P:ornithine biosynthetic process"/>
    <property type="evidence" value="ECO:0007669"/>
    <property type="project" value="TreeGrafter"/>
</dbReference>
<dbReference type="CDD" id="cd02152">
    <property type="entry name" value="OAT"/>
    <property type="match status" value="1"/>
</dbReference>
<dbReference type="Gene3D" id="3.30.2330.10">
    <property type="entry name" value="arginine biosynthesis bifunctional protein suprefamily"/>
    <property type="match status" value="1"/>
</dbReference>
<dbReference type="Gene3D" id="3.10.20.340">
    <property type="entry name" value="ArgJ beta chain, C-terminal domain"/>
    <property type="match status" value="1"/>
</dbReference>
<dbReference type="Gene3D" id="3.60.70.12">
    <property type="entry name" value="L-amino peptidase D-ALA esterase/amidase"/>
    <property type="match status" value="1"/>
</dbReference>
<dbReference type="HAMAP" id="MF_01106">
    <property type="entry name" value="ArgJ"/>
    <property type="match status" value="1"/>
</dbReference>
<dbReference type="InterPro" id="IPR002813">
    <property type="entry name" value="Arg_biosynth_ArgJ"/>
</dbReference>
<dbReference type="InterPro" id="IPR016117">
    <property type="entry name" value="ArgJ-like_dom_sf"/>
</dbReference>
<dbReference type="InterPro" id="IPR042195">
    <property type="entry name" value="ArgJ_beta_C"/>
</dbReference>
<dbReference type="NCBIfam" id="TIGR00120">
    <property type="entry name" value="ArgJ"/>
    <property type="match status" value="1"/>
</dbReference>
<dbReference type="NCBIfam" id="NF003802">
    <property type="entry name" value="PRK05388.1"/>
    <property type="match status" value="1"/>
</dbReference>
<dbReference type="PANTHER" id="PTHR23100">
    <property type="entry name" value="ARGININE BIOSYNTHESIS BIFUNCTIONAL PROTEIN ARGJ"/>
    <property type="match status" value="1"/>
</dbReference>
<dbReference type="PANTHER" id="PTHR23100:SF0">
    <property type="entry name" value="ARGININE BIOSYNTHESIS BIFUNCTIONAL PROTEIN ARGJ, MITOCHONDRIAL"/>
    <property type="match status" value="1"/>
</dbReference>
<dbReference type="Pfam" id="PF01960">
    <property type="entry name" value="ArgJ"/>
    <property type="match status" value="1"/>
</dbReference>
<dbReference type="SUPFAM" id="SSF56266">
    <property type="entry name" value="DmpA/ArgJ-like"/>
    <property type="match status" value="1"/>
</dbReference>
<protein>
    <recommendedName>
        <fullName evidence="1">Glutamate N-acetyltransferase</fullName>
        <ecNumber evidence="1">2.3.1.35</ecNumber>
    </recommendedName>
    <alternativeName>
        <fullName evidence="1">Ornithine acetyltransferase</fullName>
        <shortName evidence="1">OATase</shortName>
    </alternativeName>
    <alternativeName>
        <fullName evidence="1">Ornithine transacetylase</fullName>
    </alternativeName>
    <component>
        <recommendedName>
            <fullName evidence="1">Glutamate N-acetyltransferase alpha chain</fullName>
        </recommendedName>
    </component>
    <component>
        <recommendedName>
            <fullName evidence="1">Glutamate N-acetyltransferase beta chain</fullName>
        </recommendedName>
    </component>
</protein>
<keyword id="KW-0012">Acyltransferase</keyword>
<keyword id="KW-0028">Amino-acid biosynthesis</keyword>
<keyword id="KW-0055">Arginine biosynthesis</keyword>
<keyword id="KW-0068">Autocatalytic cleavage</keyword>
<keyword id="KW-0963">Cytoplasm</keyword>
<keyword id="KW-0808">Transferase</keyword>
<feature type="chain" id="PRO_1000065048" description="Glutamate N-acetyltransferase alpha chain" evidence="1">
    <location>
        <begin position="1"/>
        <end position="188"/>
    </location>
</feature>
<feature type="chain" id="PRO_1000065049" description="Glutamate N-acetyltransferase beta chain" evidence="1">
    <location>
        <begin position="189"/>
        <end position="408"/>
    </location>
</feature>
<feature type="active site" description="Nucleophile" evidence="1">
    <location>
        <position position="189"/>
    </location>
</feature>
<feature type="binding site" evidence="1">
    <location>
        <position position="150"/>
    </location>
    <ligand>
        <name>substrate</name>
    </ligand>
</feature>
<feature type="binding site" evidence="1">
    <location>
        <position position="176"/>
    </location>
    <ligand>
        <name>substrate</name>
    </ligand>
</feature>
<feature type="binding site" evidence="1">
    <location>
        <position position="189"/>
    </location>
    <ligand>
        <name>substrate</name>
    </ligand>
</feature>
<feature type="binding site" evidence="1">
    <location>
        <position position="271"/>
    </location>
    <ligand>
        <name>substrate</name>
    </ligand>
</feature>
<feature type="binding site" evidence="1">
    <location>
        <position position="403"/>
    </location>
    <ligand>
        <name>substrate</name>
    </ligand>
</feature>
<feature type="binding site" evidence="1">
    <location>
        <position position="408"/>
    </location>
    <ligand>
        <name>substrate</name>
    </ligand>
</feature>
<feature type="site" description="Involved in the stabilization of negative charge on the oxyanion by the formation of the oxyanion hole" evidence="1">
    <location>
        <position position="112"/>
    </location>
</feature>
<feature type="site" description="Involved in the stabilization of negative charge on the oxyanion by the formation of the oxyanion hole" evidence="1">
    <location>
        <position position="113"/>
    </location>
</feature>
<feature type="site" description="Cleavage; by autolysis" evidence="1">
    <location>
        <begin position="188"/>
        <end position="189"/>
    </location>
</feature>
<name>ARGJ_METM5</name>
<organism>
    <name type="scientific">Methanococcus maripaludis (strain C5 / ATCC BAA-1333)</name>
    <dbReference type="NCBI Taxonomy" id="402880"/>
    <lineage>
        <taxon>Archaea</taxon>
        <taxon>Methanobacteriati</taxon>
        <taxon>Methanobacteriota</taxon>
        <taxon>Methanomada group</taxon>
        <taxon>Methanococci</taxon>
        <taxon>Methanococcales</taxon>
        <taxon>Methanococcaceae</taxon>
        <taxon>Methanococcus</taxon>
    </lineage>
</organism>
<accession>A4FXT1</accession>
<evidence type="ECO:0000255" key="1">
    <source>
        <dbReference type="HAMAP-Rule" id="MF_01106"/>
    </source>
</evidence>
<sequence>MAENFVVVDGGVVAPKGFKSNGHKDRKYGAALIYSETDAVAAGVFTTNKVFAHPVALSKDVLVNNNVFRAIVANSGNANCFTKGGMEDAELLVKKAAELLKIPENQVLSASTGVIGRKMPMDIITLEVERAFENMDLENSNENASKAIMTTDAFPKTVAVEFEVKDKKIRIGGIAKGAGMIAPNMLHATMLGFITTDIEISKEDLTNSLQKATDESFNNAVVDGDMSTNDTVYVLANAQSGVKYTDCKDEFDEALTYVSKELAKMIVSDGEGAKKLIEATVYGAETKEDAKKASMSIVRSLLLKTAFFGADPNWGRIAAAVGYSGAEMDMANFDIIIGDISSEKQAILVKAGEQIADCGTPELKLAEEIMKEDKIKIIVDLKMGSFENTAFGCDLGYEYVKINSEYTT</sequence>
<reference key="1">
    <citation type="submission" date="2007-03" db="EMBL/GenBank/DDBJ databases">
        <title>Complete sequence of chromosome of Methanococcus maripaludis C5.</title>
        <authorList>
            <consortium name="US DOE Joint Genome Institute"/>
            <person name="Copeland A."/>
            <person name="Lucas S."/>
            <person name="Lapidus A."/>
            <person name="Barry K."/>
            <person name="Glavina del Rio T."/>
            <person name="Dalin E."/>
            <person name="Tice H."/>
            <person name="Pitluck S."/>
            <person name="Chertkov O."/>
            <person name="Brettin T."/>
            <person name="Bruce D."/>
            <person name="Han C."/>
            <person name="Detter J.C."/>
            <person name="Schmutz J."/>
            <person name="Larimer F."/>
            <person name="Land M."/>
            <person name="Hauser L."/>
            <person name="Kyrpides N."/>
            <person name="Mikhailova N."/>
            <person name="Sieprawska-Lupa M."/>
            <person name="Whitman W.B."/>
            <person name="Richardson P."/>
        </authorList>
    </citation>
    <scope>NUCLEOTIDE SEQUENCE [LARGE SCALE GENOMIC DNA]</scope>
    <source>
        <strain>C5 / ATCC BAA-1333</strain>
    </source>
</reference>